<name>PTPRQ_RAT</name>
<reference key="1">
    <citation type="journal article" date="1998" name="J. Biol. Chem.">
        <title>Proliferating and migrating mesangial cells responding to injury express a novel receptor protein-tyrosine phosphatase in experimental mesangial proliferative glomerulonephritis.</title>
        <authorList>
            <person name="Wright M.B."/>
            <person name="Hugo C."/>
            <person name="Seifert R."/>
            <person name="Disteche C.M."/>
            <person name="Bowen-Pope D.F."/>
        </authorList>
    </citation>
    <scope>NUCLEOTIDE SEQUENCE [MRNA]</scope>
    <scope>INDUCTION</scope>
    <source>
        <strain>Wistar</strain>
    </source>
</reference>
<reference key="2">
    <citation type="journal article" date="2003" name="Proc. Natl. Acad. Sci. U.S.A.">
        <title>Protein tyrosine phosphatase RQ is a phosphatidylinositol phosphatase that can regulate cell survival and proliferation.</title>
        <authorList>
            <person name="Oganesian A."/>
            <person name="Poot M."/>
            <person name="Daum G."/>
            <person name="Coats S.A."/>
            <person name="Wright M.B."/>
            <person name="Seifert R.A."/>
            <person name="Bowen-Pope D.F."/>
        </authorList>
    </citation>
    <scope>FUNCTION</scope>
    <scope>CATALYTIC ACTIVITY</scope>
    <scope>BIOPHYSICOCHEMICAL PROPERTIES</scope>
    <scope>MUTAGENESIS OF GLU-2171 AND CYS-2203</scope>
</reference>
<reference key="3">
    <citation type="journal article" date="2003" name="Exp. Cell Res.">
        <title>PTPRQ is a novel phosphatidylinositol phosphatase that can be expressed as a cytoplasmic protein or as a subcellularly localized receptor-like protein.</title>
        <authorList>
            <person name="Seifert R.A."/>
            <person name="Coats S.A."/>
            <person name="Oganesian A."/>
            <person name="Wright M.B."/>
            <person name="Dishmon M."/>
            <person name="Booth C.J."/>
            <person name="Johnson R.J."/>
            <person name="Alpers C.E."/>
            <person name="Bowen-Pope D.F."/>
        </authorList>
    </citation>
    <scope>ALTERNATIVE SPLICING</scope>
    <scope>SUBCELLULAR LOCATION</scope>
</reference>
<accession>O88488</accession>
<evidence type="ECO:0000250" key="1">
    <source>
        <dbReference type="UniProtKB" id="P0C5E4"/>
    </source>
</evidence>
<evidence type="ECO:0000250" key="2">
    <source>
        <dbReference type="UniProtKB" id="Q9UMZ3"/>
    </source>
</evidence>
<evidence type="ECO:0000255" key="3"/>
<evidence type="ECO:0000255" key="4">
    <source>
        <dbReference type="PROSITE-ProRule" id="PRU00160"/>
    </source>
</evidence>
<evidence type="ECO:0000255" key="5">
    <source>
        <dbReference type="PROSITE-ProRule" id="PRU00316"/>
    </source>
</evidence>
<evidence type="ECO:0000255" key="6">
    <source>
        <dbReference type="PROSITE-ProRule" id="PRU10044"/>
    </source>
</evidence>
<evidence type="ECO:0000269" key="7">
    <source>
    </source>
</evidence>
<evidence type="ECO:0000269" key="8">
    <source>
    </source>
</evidence>
<evidence type="ECO:0000269" key="9">
    <source>
    </source>
</evidence>
<evidence type="ECO:0000305" key="10"/>
<evidence type="ECO:0000305" key="11">
    <source>
    </source>
</evidence>
<feature type="signal peptide" evidence="3">
    <location>
        <begin position="1"/>
        <end position="18"/>
    </location>
</feature>
<feature type="chain" id="PRO_5000054322" description="Phosphatidylinositol phosphatase PTPRQ">
    <location>
        <begin position="19"/>
        <end position="2302"/>
    </location>
</feature>
<feature type="topological domain" description="Extracellular" evidence="3">
    <location>
        <begin position="19"/>
        <end position="1908"/>
    </location>
</feature>
<feature type="transmembrane region" description="Helical" evidence="3">
    <location>
        <begin position="1909"/>
        <end position="1929"/>
    </location>
</feature>
<feature type="topological domain" description="Cytoplasmic" evidence="3">
    <location>
        <begin position="1930"/>
        <end position="2302"/>
    </location>
</feature>
<feature type="domain" description="Fibronectin type-III 1" evidence="5">
    <location>
        <begin position="60"/>
        <end position="155"/>
    </location>
</feature>
<feature type="domain" description="Fibronectin type-III 2" evidence="5">
    <location>
        <begin position="159"/>
        <end position="254"/>
    </location>
</feature>
<feature type="domain" description="Fibronectin type-III 3" evidence="5">
    <location>
        <begin position="310"/>
        <end position="398"/>
    </location>
</feature>
<feature type="domain" description="Fibronectin type-III 4" evidence="5">
    <location>
        <begin position="401"/>
        <end position="501"/>
    </location>
</feature>
<feature type="domain" description="Fibronectin type-III 5" evidence="5">
    <location>
        <begin position="474"/>
        <end position="566"/>
    </location>
</feature>
<feature type="domain" description="Fibronectin type-III 6" evidence="5">
    <location>
        <begin position="570"/>
        <end position="665"/>
    </location>
</feature>
<feature type="domain" description="Fibronectin type-III 7" evidence="5">
    <location>
        <begin position="670"/>
        <end position="759"/>
    </location>
</feature>
<feature type="domain" description="Fibronectin type-III 8" evidence="5">
    <location>
        <begin position="764"/>
        <end position="854"/>
    </location>
</feature>
<feature type="domain" description="Fibronectin type-III 9" evidence="5">
    <location>
        <begin position="859"/>
        <end position="948"/>
    </location>
</feature>
<feature type="domain" description="Fibronectin type-III 10" evidence="5">
    <location>
        <begin position="953"/>
        <end position="1053"/>
    </location>
</feature>
<feature type="domain" description="Fibronectin type-III 11" evidence="5">
    <location>
        <begin position="1058"/>
        <end position="1151"/>
    </location>
</feature>
<feature type="domain" description="Fibronectin type-III 12" evidence="5">
    <location>
        <begin position="1156"/>
        <end position="1243"/>
    </location>
</feature>
<feature type="domain" description="Fibronectin type-III 13" evidence="5">
    <location>
        <begin position="1248"/>
        <end position="1341"/>
    </location>
</feature>
<feature type="domain" description="Fibronectin type-III 14" evidence="5">
    <location>
        <begin position="1345"/>
        <end position="1431"/>
    </location>
</feature>
<feature type="domain" description="Fibronectin type-III 15" evidence="5">
    <location>
        <begin position="1435"/>
        <end position="1539"/>
    </location>
</feature>
<feature type="domain" description="Fibronectin type-III 16" evidence="5">
    <location>
        <begin position="1544"/>
        <end position="1642"/>
    </location>
</feature>
<feature type="domain" description="Fibronectin type-III 17" evidence="5">
    <location>
        <begin position="1647"/>
        <end position="1748"/>
    </location>
</feature>
<feature type="domain" description="Tyrosine-protein phosphatase" evidence="4">
    <location>
        <begin position="2006"/>
        <end position="2262"/>
    </location>
</feature>
<feature type="active site" description="Phosphocysteine intermediate" evidence="4 6">
    <location>
        <position position="2203"/>
    </location>
</feature>
<feature type="glycosylation site" description="N-linked (GlcNAc...) asparagine" evidence="3">
    <location>
        <position position="54"/>
    </location>
</feature>
<feature type="glycosylation site" description="N-linked (GlcNAc...) asparagine" evidence="3">
    <location>
        <position position="162"/>
    </location>
</feature>
<feature type="glycosylation site" description="N-linked (GlcNAc...) asparagine" evidence="3">
    <location>
        <position position="169"/>
    </location>
</feature>
<feature type="glycosylation site" description="N-linked (GlcNAc...) asparagine" evidence="3">
    <location>
        <position position="318"/>
    </location>
</feature>
<feature type="glycosylation site" description="N-linked (GlcNAc...) asparagine" evidence="3">
    <location>
        <position position="354"/>
    </location>
</feature>
<feature type="glycosylation site" description="N-linked (GlcNAc...) asparagine" evidence="3">
    <location>
        <position position="389"/>
    </location>
</feature>
<feature type="glycosylation site" description="N-linked (GlcNAc...) asparagine" evidence="3">
    <location>
        <position position="733"/>
    </location>
</feature>
<feature type="glycosylation site" description="N-linked (GlcNAc...) asparagine" evidence="3">
    <location>
        <position position="746"/>
    </location>
</feature>
<feature type="glycosylation site" description="N-linked (GlcNAc...) asparagine" evidence="3">
    <location>
        <position position="904"/>
    </location>
</feature>
<feature type="glycosylation site" description="N-linked (GlcNAc...) asparagine" evidence="3">
    <location>
        <position position="998"/>
    </location>
</feature>
<feature type="glycosylation site" description="N-linked (GlcNAc...) asparagine" evidence="3">
    <location>
        <position position="1010"/>
    </location>
</feature>
<feature type="glycosylation site" description="N-linked (GlcNAc...) asparagine" evidence="3">
    <location>
        <position position="1040"/>
    </location>
</feature>
<feature type="glycosylation site" description="N-linked (GlcNAc...) asparagine" evidence="3">
    <location>
        <position position="1251"/>
    </location>
</feature>
<feature type="glycosylation site" description="N-linked (GlcNAc...) asparagine" evidence="3">
    <location>
        <position position="1256"/>
    </location>
</feature>
<feature type="glycosylation site" description="N-linked (GlcNAc...) asparagine" evidence="3">
    <location>
        <position position="1805"/>
    </location>
</feature>
<feature type="mutagenesis site" description="Enhances the tyrosine-protein phosphatase activity but abolishes the phosphatidylinositol phosphatase activity." evidence="7">
    <original>E</original>
    <variation>D</variation>
    <location>
        <position position="2171"/>
    </location>
</feature>
<feature type="mutagenesis site" description="Abolishes the weak tyrosine-protein phosphatase activity." evidence="7">
    <original>C</original>
    <variation>S</variation>
    <location>
        <position position="2203"/>
    </location>
</feature>
<proteinExistence type="evidence at protein level"/>
<dbReference type="EC" id="3.1.3.36" evidence="7"/>
<dbReference type="EC" id="3.1.3.67" evidence="7"/>
<dbReference type="EC" id="3.1.3.86" evidence="7"/>
<dbReference type="EC" id="3.1.3.95" evidence="7"/>
<dbReference type="EMBL" id="AF063249">
    <property type="protein sequence ID" value="AAC34801.1"/>
    <property type="molecule type" value="mRNA"/>
</dbReference>
<dbReference type="PIR" id="T14328">
    <property type="entry name" value="T14328"/>
</dbReference>
<dbReference type="RefSeq" id="NP_075214.1">
    <property type="nucleotide sequence ID" value="NM_022925.1"/>
</dbReference>
<dbReference type="SMR" id="O88488"/>
<dbReference type="FunCoup" id="O88488">
    <property type="interactions" value="5"/>
</dbReference>
<dbReference type="STRING" id="10116.ENSRNOP00000069293"/>
<dbReference type="GlyCosmos" id="O88488">
    <property type="glycosylation" value="15 sites, No reported glycans"/>
</dbReference>
<dbReference type="GlyGen" id="O88488">
    <property type="glycosylation" value="15 sites"/>
</dbReference>
<dbReference type="iPTMnet" id="O88488"/>
<dbReference type="PhosphoSitePlus" id="O88488"/>
<dbReference type="PaxDb" id="10116-ENSRNOP00000049245"/>
<dbReference type="GeneID" id="360417"/>
<dbReference type="KEGG" id="rno:360417"/>
<dbReference type="UCSC" id="RGD:620779">
    <molecule id="O88488-1"/>
    <property type="organism name" value="rat"/>
</dbReference>
<dbReference type="AGR" id="RGD:620779"/>
<dbReference type="CTD" id="374462"/>
<dbReference type="RGD" id="620779">
    <property type="gene designation" value="Ptprq"/>
</dbReference>
<dbReference type="eggNOG" id="KOG3510">
    <property type="taxonomic scope" value="Eukaryota"/>
</dbReference>
<dbReference type="InParanoid" id="O88488"/>
<dbReference type="PhylomeDB" id="O88488"/>
<dbReference type="SABIO-RK" id="O88488"/>
<dbReference type="PRO" id="PR:O88488"/>
<dbReference type="Proteomes" id="UP000002494">
    <property type="component" value="Unplaced"/>
</dbReference>
<dbReference type="GO" id="GO:0016324">
    <property type="term" value="C:apical plasma membrane"/>
    <property type="evidence" value="ECO:0000250"/>
    <property type="project" value="UniProtKB"/>
</dbReference>
<dbReference type="GO" id="GO:0009925">
    <property type="term" value="C:basal plasma membrane"/>
    <property type="evidence" value="ECO:0007669"/>
    <property type="project" value="UniProtKB-SubCell"/>
</dbReference>
<dbReference type="GO" id="GO:0043235">
    <property type="term" value="C:receptor complex"/>
    <property type="evidence" value="ECO:0000318"/>
    <property type="project" value="GO_Central"/>
</dbReference>
<dbReference type="GO" id="GO:0120044">
    <property type="term" value="C:stereocilium base"/>
    <property type="evidence" value="ECO:0000250"/>
    <property type="project" value="UniProtKB"/>
</dbReference>
<dbReference type="GO" id="GO:0032421">
    <property type="term" value="C:stereocilium bundle"/>
    <property type="evidence" value="ECO:0000266"/>
    <property type="project" value="RGD"/>
</dbReference>
<dbReference type="GO" id="GO:0016314">
    <property type="term" value="F:phosphatidylinositol-3,4,5-trisphosphate 3-phosphatase activity"/>
    <property type="evidence" value="ECO:0007669"/>
    <property type="project" value="RHEA"/>
</dbReference>
<dbReference type="GO" id="GO:0034485">
    <property type="term" value="F:phosphatidylinositol-3,4,5-trisphosphate 5-phosphatase activity"/>
    <property type="evidence" value="ECO:0007669"/>
    <property type="project" value="RHEA"/>
</dbReference>
<dbReference type="GO" id="GO:0052629">
    <property type="term" value="F:phosphatidylinositol-3,5-bisphosphate 3-phosphatase activity"/>
    <property type="evidence" value="ECO:0007669"/>
    <property type="project" value="RHEA"/>
</dbReference>
<dbReference type="GO" id="GO:0043813">
    <property type="term" value="F:phosphatidylinositol-3,5-bisphosphate 5-phosphatase activity"/>
    <property type="evidence" value="ECO:0007669"/>
    <property type="project" value="RHEA"/>
</dbReference>
<dbReference type="GO" id="GO:0004439">
    <property type="term" value="F:phosphatidylinositol-4,5-bisphosphate 5-phosphatase activity"/>
    <property type="evidence" value="ECO:0007669"/>
    <property type="project" value="RHEA"/>
</dbReference>
<dbReference type="GO" id="GO:0004725">
    <property type="term" value="F:protein tyrosine phosphatase activity"/>
    <property type="evidence" value="ECO:0007669"/>
    <property type="project" value="UniProtKB-EC"/>
</dbReference>
<dbReference type="GO" id="GO:0050910">
    <property type="term" value="P:detection of mechanical stimulus involved in sensory perception of sound"/>
    <property type="evidence" value="ECO:0000266"/>
    <property type="project" value="RGD"/>
</dbReference>
<dbReference type="GO" id="GO:0002244">
    <property type="term" value="P:hematopoietic progenitor cell differentiation"/>
    <property type="evidence" value="ECO:0000266"/>
    <property type="project" value="RGD"/>
</dbReference>
<dbReference type="GO" id="GO:0042472">
    <property type="term" value="P:inner ear morphogenesis"/>
    <property type="evidence" value="ECO:0000266"/>
    <property type="project" value="RGD"/>
</dbReference>
<dbReference type="GO" id="GO:0050885">
    <property type="term" value="P:neuromuscular process controlling balance"/>
    <property type="evidence" value="ECO:0000266"/>
    <property type="project" value="RGD"/>
</dbReference>
<dbReference type="GO" id="GO:0045598">
    <property type="term" value="P:regulation of fat cell differentiation"/>
    <property type="evidence" value="ECO:0000250"/>
    <property type="project" value="UniProtKB"/>
</dbReference>
<dbReference type="GO" id="GO:0060116">
    <property type="term" value="P:vestibular receptor cell morphogenesis"/>
    <property type="evidence" value="ECO:0000266"/>
    <property type="project" value="RGD"/>
</dbReference>
<dbReference type="CDD" id="cd00063">
    <property type="entry name" value="FN3"/>
    <property type="match status" value="16"/>
</dbReference>
<dbReference type="CDD" id="cd14616">
    <property type="entry name" value="R-PTPc-Q"/>
    <property type="match status" value="1"/>
</dbReference>
<dbReference type="FunFam" id="2.60.40.10:FF:000937">
    <property type="entry name" value="phosphatidylinositol phosphatase PTPRQ isoform X1"/>
    <property type="match status" value="1"/>
</dbReference>
<dbReference type="FunFam" id="2.60.40.10:FF:001431">
    <property type="entry name" value="phosphatidylinositol phosphatase PTPRQ isoform X1"/>
    <property type="match status" value="1"/>
</dbReference>
<dbReference type="FunFam" id="3.90.190.10:FF:000041">
    <property type="entry name" value="phosphatidylinositol phosphatase PTPRQ isoform X1"/>
    <property type="match status" value="1"/>
</dbReference>
<dbReference type="FunFam" id="2.60.40.10:FF:001217">
    <property type="entry name" value="phosphatidylinositol phosphatase PTPRQ isoform X2"/>
    <property type="match status" value="1"/>
</dbReference>
<dbReference type="FunFam" id="2.60.40.10:FF:001685">
    <property type="entry name" value="phosphatidylinositol phosphatase PTPRQ isoform X2"/>
    <property type="match status" value="1"/>
</dbReference>
<dbReference type="FunFam" id="2.60.40.10:FF:001147">
    <property type="entry name" value="phosphatidylinositol phosphatase PTPRQ isoform X3"/>
    <property type="match status" value="2"/>
</dbReference>
<dbReference type="FunFam" id="2.60.40.10:FF:000478">
    <property type="entry name" value="Protein tyrosine phosphatase, receptor type Q"/>
    <property type="match status" value="2"/>
</dbReference>
<dbReference type="FunFam" id="2.60.40.10:FF:000869">
    <property type="entry name" value="Protein tyrosine phosphatase, receptor type Q"/>
    <property type="match status" value="1"/>
</dbReference>
<dbReference type="FunFam" id="2.60.40.10:FF:001266">
    <property type="entry name" value="Protein tyrosine phosphatase, receptor type Q"/>
    <property type="match status" value="1"/>
</dbReference>
<dbReference type="FunFam" id="2.60.40.10:FF:001474">
    <property type="entry name" value="Protein tyrosine phosphatase, receptor type Q"/>
    <property type="match status" value="1"/>
</dbReference>
<dbReference type="FunFam" id="2.60.40.10:FF:001645">
    <property type="entry name" value="Protein tyrosine phosphatase, receptor type Q"/>
    <property type="match status" value="1"/>
</dbReference>
<dbReference type="FunFam" id="2.60.40.10:FF:001879">
    <property type="entry name" value="Protein tyrosine phosphatase, receptor type Q"/>
    <property type="match status" value="1"/>
</dbReference>
<dbReference type="Gene3D" id="2.60.40.10">
    <property type="entry name" value="Immunoglobulins"/>
    <property type="match status" value="16"/>
</dbReference>
<dbReference type="Gene3D" id="3.90.190.10">
    <property type="entry name" value="Protein tyrosine phosphatase superfamily"/>
    <property type="match status" value="1"/>
</dbReference>
<dbReference type="InterPro" id="IPR003961">
    <property type="entry name" value="FN3_dom"/>
</dbReference>
<dbReference type="InterPro" id="IPR036116">
    <property type="entry name" value="FN3_sf"/>
</dbReference>
<dbReference type="InterPro" id="IPR013783">
    <property type="entry name" value="Ig-like_fold"/>
</dbReference>
<dbReference type="InterPro" id="IPR029021">
    <property type="entry name" value="Prot-tyrosine_phosphatase-like"/>
</dbReference>
<dbReference type="InterPro" id="IPR000242">
    <property type="entry name" value="PTP_cat"/>
</dbReference>
<dbReference type="InterPro" id="IPR050713">
    <property type="entry name" value="RTP_Phos/Ushers"/>
</dbReference>
<dbReference type="InterPro" id="IPR016130">
    <property type="entry name" value="Tyr_Pase_AS"/>
</dbReference>
<dbReference type="InterPro" id="IPR003595">
    <property type="entry name" value="Tyr_Pase_cat"/>
</dbReference>
<dbReference type="InterPro" id="IPR000387">
    <property type="entry name" value="Tyr_Pase_dom"/>
</dbReference>
<dbReference type="PANTHER" id="PTHR46957">
    <property type="entry name" value="CYTOKINE RECEPTOR"/>
    <property type="match status" value="1"/>
</dbReference>
<dbReference type="PANTHER" id="PTHR46957:SF1">
    <property type="entry name" value="PHOSPHATIDYLINOSITOL PHOSPHATASE PTPRQ"/>
    <property type="match status" value="1"/>
</dbReference>
<dbReference type="Pfam" id="PF00041">
    <property type="entry name" value="fn3"/>
    <property type="match status" value="13"/>
</dbReference>
<dbReference type="Pfam" id="PF00102">
    <property type="entry name" value="Y_phosphatase"/>
    <property type="match status" value="1"/>
</dbReference>
<dbReference type="PRINTS" id="PR00700">
    <property type="entry name" value="PRTYPHPHTASE"/>
</dbReference>
<dbReference type="SMART" id="SM00060">
    <property type="entry name" value="FN3"/>
    <property type="match status" value="16"/>
</dbReference>
<dbReference type="SMART" id="SM00194">
    <property type="entry name" value="PTPc"/>
    <property type="match status" value="1"/>
</dbReference>
<dbReference type="SMART" id="SM00404">
    <property type="entry name" value="PTPc_motif"/>
    <property type="match status" value="1"/>
</dbReference>
<dbReference type="SUPFAM" id="SSF52799">
    <property type="entry name" value="(Phosphotyrosine protein) phosphatases II"/>
    <property type="match status" value="1"/>
</dbReference>
<dbReference type="SUPFAM" id="SSF49265">
    <property type="entry name" value="Fibronectin type III"/>
    <property type="match status" value="9"/>
</dbReference>
<dbReference type="PROSITE" id="PS50853">
    <property type="entry name" value="FN3"/>
    <property type="match status" value="16"/>
</dbReference>
<dbReference type="PROSITE" id="PS00383">
    <property type="entry name" value="TYR_PHOSPHATASE_1"/>
    <property type="match status" value="1"/>
</dbReference>
<dbReference type="PROSITE" id="PS50056">
    <property type="entry name" value="TYR_PHOSPHATASE_2"/>
    <property type="match status" value="1"/>
</dbReference>
<dbReference type="PROSITE" id="PS50055">
    <property type="entry name" value="TYR_PHOSPHATASE_PTP"/>
    <property type="match status" value="1"/>
</dbReference>
<gene>
    <name type="primary">Ptprq</name>
    <name type="synonym">Ptpgmc1</name>
</gene>
<sequence>MMDFHFSFLFLLIGTSESQVDVSSSFDGTGYDITLSSVSATTYSSPVSRTLATNVTKPGPPVFLAGERVGSAGILLSWNTPPNPNGRIISYVVKYKEVCPWMQTAYTRARAKPDSLEVLLTNLNPGTTYEIKVAAENNAGIGVFSDPFLFQTAESAPGKVVNLTVEALNYSAVNLIWYLPRQPNGKITSFKISVKHARSGIVVKDVSLRVEDILSGKLPECNENSESFLWSTTSPSPTLGRVTPTVRTTQSSSTAARSKISSVWKEPISFVVTHLRPYTTYLFEVSAVTTEAGYIDSTIVRTPESVPEGPPQNCIMGNVTGKAFSISWDPPTIVTGKFSYRVELYGPSGRILDNSTKDLRFAFTHLTPFTMYDVYVAAETSAGVGPKSNLSVFTPPDVPGAVFDLQIAEVEATEIRITWRKPRQPNGIISQYRVKVSVLETGVVLENTLLTGQDESISNPMSPEIMNLVDPMIGFYEGSGEMSSDLHSPASFIYNSHPHNDFPASTRAEEQSSPVVTTRNQYMTDITAEQLSYVVRRLVPFTEHTISVSAFTIMGEGPPTVLTVRTREQVPSSIQIINYKNISSSSILLYWDPPEYPNGKITHYTIYATELDTNRAFQMTTVDNSFLITGLKKYTRYKMRVAASTHVGESSLSEENDIFVRTPEDEPESSPQDVQVTGVSPSELRLKWSPPEKPNGIIIAYEVLYQNADTLFVKNTSTTDIIISDLKPYTLYNISIRSYTRLGHGNQSSSLLSVRTSETVPDSAPENITYKNISSGEIEISFLPPRSPNGIIQKYTIYLKRSNSHEARTINTTSLTQTIGGLKKYTHYVIEVSASTLKGEGIRSRPISILTEEDAPDSPPQNFSVKQLSGVTVMLSWQPPLEPNGIILYYTVYVWDKSSLRAINATEASLVLSDLDYNVDYGACVTASTRFGDGNARSSIINFRTPEGEPSDPPNDVHYVNLSSSSIILFWTPPVKPNGIIQYYSVYYQNTSGTFVQNFTLLQVTKESDNVTVSARIYRLAIFSYYTFWLTASTSVGNGNKSSDIIHVYTDQDIPEGPVGNLTFESISSTAIHVSWEPPSQPNGLVFYYLSLNLQQSPPRHMIPPLVTYENSIDFDDLEKYTDYIFKITPSTEKGFSETYTTQLHIKTEEDVPDTPPIINTFKNLSSTSILLSWDPPLKPNGAILGYHLTLQGPHANHTFVTSGNHIVLEELSPFTLYSFFAAARTMKGLGPSSILFFYTDESAPLAPPQNLTLINYTSDFVWLTWSPSPLPGGIVKVYSFKIHEHETDTVFYKNISGLQTDAKLEGLEPVSTYSVSVSAFTKVGNGNQYSNVVEFTTQESVPEAVRNIECVARDWQSVSVRWDPPRKTNGIIIHYMITVGGNSTKVSPRDPTYTFTKLLPNTSYVFEVRASTSAGEGNESRCDISTLPETVPSAPTNVAFSNVQSTSATLTWTKPDTIFGYFQNYKITTQLRAQKCREWEPEECIEHQKDQYLYEANQTEETVHGLKKFRWYRFQVAASTNVGYSNASEWISTQTLPGPPDGPPENVHVVATSPFGINISWSEPAVITGPTFYLIDVKSVDDDDFNISFLKSNEENKTTEINNLEVFTRYSVVITAFVGNVSRAYTDGKSSAEVIITTLESVPKDPPNNMTFQKIPDEVTKFQLTFLPPSQPNGNIRVYQALVYREDDPTAVQIHNFSIIQKTDTSIIAMLEGLKGGHTYNISVYAINSAGAGPKVQMRITMDIKAPARPKSKPIPIRDATGKLLVTSTTITIRMPICYYNDDHGPIRNVQVLVAETGAQQDGNVTKWYDAYFNKARPYFTNEGFPNPPCIEGKTKFSGNEEIYVIGADNACMIPGNEEKICNGPLKPKKQYLFKFRATNVMGQFTDSEYSDPIKTLGEGLSERTVEIILSVTLCILSIILLGTAIFAFVRIRQKQKEGGTYSPRDAEIIDTKFKLDQLITVADLELKDERLTRLLSYRKSIKPISKKSFLQHVEELCTNSNLKFQEEFSELPKFLQDLSSTDADLPWNRAKNRFPNIKPYNNNRVKLIADVSLPGSDYINASYVSGYLCPNEFIATQGPLPGTVGDFWRMVWETRTKTLVMLTQCFEKGRIRCHQYWPEDNKPVTVFGDIVITKLMEDIQIDWTIRDLKIERHGDCMTVRQCNFTGWPEHGVPENTTPLIHFVKLVRTSRAHDTTPMVVHCSAGVGRTGVFIALDHLTQHINNHDFVDIYGLVAELRSERMCMVQNLAQYIFLHQCILDLLSNKGGHQPVCFVNYSTLQKMDSLDAMEGDVELEWEETTM</sequence>
<protein>
    <recommendedName>
        <fullName>Phosphatidylinositol phosphatase PTPRQ</fullName>
        <ecNumber evidence="7">3.1.3.36</ecNumber>
        <ecNumber evidence="7">3.1.3.67</ecNumber>
        <ecNumber evidence="7">3.1.3.86</ecNumber>
        <ecNumber evidence="7">3.1.3.95</ecNumber>
    </recommendedName>
    <alternativeName>
        <fullName>Protein-tyrosine phosphatase receptor-type expressed by glomerular mesangial cells protein 1</fullName>
        <shortName>rPTP-GMC1</shortName>
    </alternativeName>
    <alternativeName>
        <fullName>Receptor-type tyrosine-protein phosphatase Q</fullName>
        <shortName>PTP-RQ</shortName>
        <shortName>R-PTP-Q</shortName>
    </alternativeName>
</protein>
<keyword id="KW-0025">Alternative splicing</keyword>
<keyword id="KW-1003">Cell membrane</keyword>
<keyword id="KW-0966">Cell projection</keyword>
<keyword id="KW-0325">Glycoprotein</keyword>
<keyword id="KW-0378">Hydrolase</keyword>
<keyword id="KW-0443">Lipid metabolism</keyword>
<keyword id="KW-0472">Membrane</keyword>
<keyword id="KW-1208">Phospholipid metabolism</keyword>
<keyword id="KW-0904">Protein phosphatase</keyword>
<keyword id="KW-0675">Receptor</keyword>
<keyword id="KW-1185">Reference proteome</keyword>
<keyword id="KW-0677">Repeat</keyword>
<keyword id="KW-0732">Signal</keyword>
<keyword id="KW-0812">Transmembrane</keyword>
<keyword id="KW-1133">Transmembrane helix</keyword>
<comment type="function">
    <text evidence="1 2 7">Dephosphorylates phosphatidylinositol phosphates, such as phosphatidylinositol 3,4,5-trisphosphate (PIP3) and phosphatidylinositol 3,5-diphosphates, with preference for PIP3 (PubMed:12802008). Phosphate can be hydrolyzed from the D3 and D5 positions in the inositol ring (PubMed:12802008). Has low tyrosine-protein phosphatase activity in vitro; however, the relevance of such activity in vivo is unclear (PubMed:12802008). Plays an important role in adipogenesis of mesenchymal stem cells (MSCs). Regulates the phosphorylation state of AKT1 by regulating the levels of PIP3 level in MSCs and preadipocyte cells (By similarity). Required for hair bundle maturation, a process that enables hair cells to detect and transmit sound and balance signals effectively, therefore affecting auditory function. May act by regulating the level of phosphatidylinositol 4,5-bisphosphate (PIP2) level in the basal region of hair bundles (By similarity).</text>
</comment>
<comment type="catalytic activity">
    <reaction evidence="7">
        <text>a 1,2-diacyl-sn-glycero-3-phospho-(1D-myo-inositol-3,4,5-trisphosphate) + H2O = a 1,2-diacyl-sn-glycero-3-phospho-(1D-myo-inositol-4,5-bisphosphate) + phosphate</text>
        <dbReference type="Rhea" id="RHEA:25017"/>
        <dbReference type="ChEBI" id="CHEBI:15377"/>
        <dbReference type="ChEBI" id="CHEBI:43474"/>
        <dbReference type="ChEBI" id="CHEBI:57836"/>
        <dbReference type="ChEBI" id="CHEBI:58456"/>
        <dbReference type="EC" id="3.1.3.67"/>
    </reaction>
    <physiologicalReaction direction="left-to-right" evidence="11">
        <dbReference type="Rhea" id="RHEA:25018"/>
    </physiologicalReaction>
</comment>
<comment type="catalytic activity">
    <reaction evidence="7">
        <text>a 1,2-diacyl-sn-glycero-3-phospho-(1D-myo-inositol-3,4,5-trisphosphate) + H2O = a 1,2-diacyl-sn-glycero-3-phospho-(1D-myo-inositol-3,4-bisphosphate) + phosphate</text>
        <dbReference type="Rhea" id="RHEA:25528"/>
        <dbReference type="ChEBI" id="CHEBI:15377"/>
        <dbReference type="ChEBI" id="CHEBI:43474"/>
        <dbReference type="ChEBI" id="CHEBI:57658"/>
        <dbReference type="ChEBI" id="CHEBI:57836"/>
        <dbReference type="EC" id="3.1.3.86"/>
    </reaction>
    <physiologicalReaction direction="left-to-right" evidence="11">
        <dbReference type="Rhea" id="RHEA:25529"/>
    </physiologicalReaction>
</comment>
<comment type="catalytic activity">
    <reaction evidence="7">
        <text>a 1,2-diacyl-sn-glycero-3-phospho-(1D-myo-inositol-3,5-bisphosphate) + H2O = a 1,2-diacyl-sn-glycero-3-phospho-(1D-myo-inositol-5-phosphate) + phosphate</text>
        <dbReference type="Rhea" id="RHEA:39019"/>
        <dbReference type="ChEBI" id="CHEBI:15377"/>
        <dbReference type="ChEBI" id="CHEBI:43474"/>
        <dbReference type="ChEBI" id="CHEBI:57795"/>
        <dbReference type="ChEBI" id="CHEBI:57923"/>
        <dbReference type="EC" id="3.1.3.95"/>
    </reaction>
    <physiologicalReaction direction="left-to-right" evidence="11">
        <dbReference type="Rhea" id="RHEA:39020"/>
    </physiologicalReaction>
</comment>
<comment type="catalytic activity">
    <reaction evidence="7">
        <text>a 1,2-diacyl-sn-glycero-3-phospho-(1D-myo-inositol-3,5-bisphosphate) + H2O = a 1,2-diacyl-sn-glycero-3-phospho-(1D-myo-inositol-3-phosphate) + phosphate</text>
        <dbReference type="Rhea" id="RHEA:32955"/>
        <dbReference type="ChEBI" id="CHEBI:15377"/>
        <dbReference type="ChEBI" id="CHEBI:43474"/>
        <dbReference type="ChEBI" id="CHEBI:57923"/>
        <dbReference type="ChEBI" id="CHEBI:58088"/>
    </reaction>
    <physiologicalReaction direction="left-to-right" evidence="11">
        <dbReference type="Rhea" id="RHEA:32956"/>
    </physiologicalReaction>
</comment>
<comment type="catalytic activity">
    <reaction evidence="7">
        <text>a 1,2-diacyl-sn-glycero-3-phospho-(1D-myo-inositol-4,5-bisphosphate) + H2O = a 1,2-diacyl-sn-glycero-3-phospho-(1D-myo-inositol 4-phosphate) + phosphate</text>
        <dbReference type="Rhea" id="RHEA:22764"/>
        <dbReference type="ChEBI" id="CHEBI:15377"/>
        <dbReference type="ChEBI" id="CHEBI:43474"/>
        <dbReference type="ChEBI" id="CHEBI:58178"/>
        <dbReference type="ChEBI" id="CHEBI:58456"/>
        <dbReference type="EC" id="3.1.3.36"/>
    </reaction>
    <physiologicalReaction direction="left-to-right" evidence="11">
        <dbReference type="Rhea" id="RHEA:22765"/>
    </physiologicalReaction>
</comment>
<comment type="biophysicochemical properties">
    <kinetics>
        <KM evidence="7">125 uM for diC8-PI(3,4,5)P3</KM>
        <Vmax evidence="7">18.3 nmol/min/mg enzyme with diC8-PI(3,4,5)P3 as substrate</Vmax>
    </kinetics>
</comment>
<comment type="subunit">
    <text evidence="1">Interacts with TPRN. TPRN, CLIC5 and PTPQR form concentric rings at the base of stereocilia and may form a complex.</text>
</comment>
<comment type="subcellular location">
    <subcellularLocation>
        <location evidence="1">Cell projection</location>
        <location evidence="1">Stereocilium</location>
    </subcellularLocation>
    <subcellularLocation>
        <location evidence="1">Apical cell membrane</location>
        <topology evidence="3">Single-pass type I membrane protein</topology>
    </subcellularLocation>
    <subcellularLocation>
        <location evidence="2">Basal cell membrane</location>
        <topology evidence="3">Single-pass type I membrane protein</topology>
    </subcellularLocation>
    <text evidence="1 2 8">Detected at the stereocilium base and at the apical cell membrane in mature hair cells (By similarity). Forms ring-like structures in the stereocilium taper region (By similarity). Detected at the basal cell membrane in fetal kidney podocytes (By similarity). A small isoform that lacks the N-terminal part and starts after the transmembrane region localizes in the cytoplasm (PubMed:12837292).</text>
</comment>
<comment type="alternative products">
    <event type="alternative splicing"/>
    <isoform>
        <id>O88488-1</id>
        <name>1</name>
        <sequence type="displayed"/>
    </isoform>
    <text>A number of isoforms are produced.</text>
</comment>
<comment type="induction">
    <text evidence="9">Up-regulated during the period of mesangial cell migration and proliferation that follows mesangial cell injury.</text>
</comment>
<comment type="similarity">
    <text evidence="10">Belongs to the protein-tyrosine phosphatase family. Receptor class 2A subfamily.</text>
</comment>
<organism>
    <name type="scientific">Rattus norvegicus</name>
    <name type="common">Rat</name>
    <dbReference type="NCBI Taxonomy" id="10116"/>
    <lineage>
        <taxon>Eukaryota</taxon>
        <taxon>Metazoa</taxon>
        <taxon>Chordata</taxon>
        <taxon>Craniata</taxon>
        <taxon>Vertebrata</taxon>
        <taxon>Euteleostomi</taxon>
        <taxon>Mammalia</taxon>
        <taxon>Eutheria</taxon>
        <taxon>Euarchontoglires</taxon>
        <taxon>Glires</taxon>
        <taxon>Rodentia</taxon>
        <taxon>Myomorpha</taxon>
        <taxon>Muroidea</taxon>
        <taxon>Muridae</taxon>
        <taxon>Murinae</taxon>
        <taxon>Rattus</taxon>
    </lineage>
</organism>